<proteinExistence type="inferred from homology"/>
<comment type="function">
    <text evidence="1">Converts 2-succinyl-6-hydroxy-2,4-cyclohexadiene-1-carboxylate (SHCHC) to 2-succinylbenzoate (OSB).</text>
</comment>
<comment type="catalytic activity">
    <reaction evidence="1">
        <text>(1R,6R)-6-hydroxy-2-succinyl-cyclohexa-2,4-diene-1-carboxylate = 2-succinylbenzoate + H2O</text>
        <dbReference type="Rhea" id="RHEA:10196"/>
        <dbReference type="ChEBI" id="CHEBI:15377"/>
        <dbReference type="ChEBI" id="CHEBI:18325"/>
        <dbReference type="ChEBI" id="CHEBI:58689"/>
        <dbReference type="EC" id="4.2.1.113"/>
    </reaction>
</comment>
<comment type="cofactor">
    <cofactor evidence="1">
        <name>a divalent metal cation</name>
        <dbReference type="ChEBI" id="CHEBI:60240"/>
    </cofactor>
</comment>
<comment type="pathway">
    <text evidence="1">Quinol/quinone metabolism; 1,4-dihydroxy-2-naphthoate biosynthesis; 1,4-dihydroxy-2-naphthoate from chorismate: step 4/7.</text>
</comment>
<comment type="pathway">
    <text evidence="1">Quinol/quinone metabolism; menaquinone biosynthesis.</text>
</comment>
<comment type="similarity">
    <text evidence="1">Belongs to the mandelate racemase/muconate lactonizing enzyme family. MenC type 1 subfamily.</text>
</comment>
<sequence>MRSAQVYRWQIPMDAGVVLRDRRLKTRDGLYVCLRDGEREGWGEISPLPGFSQETWEEAQTALLTWVNDWLQGSEGLPEMPSVAFGASCALAELTGVLPEAADYRAAPLCTGDPDDLVLRLADMPGEKIAKVKVGLYEAVRDGMVVNLLLEAIPDLHLRLDANRAWTPLKAQQFAKYVNPDYRARIAFLEEPCKTRDDSRAFARETGIAIAWDESLREADFTFEAEEGVKAVVIKPTLTGSLDKVREQVAAAHALGLTVVISSSIESSLGLTQLARIAAWLTPGTLPGLDTLHLMQAQQVRPWPGSALPCLKRDELERLL</sequence>
<reference key="1">
    <citation type="journal article" date="2011" name="J. Bacteriol.">
        <title>Comparative genomics of 28 Salmonella enterica isolates: evidence for CRISPR-mediated adaptive sublineage evolution.</title>
        <authorList>
            <person name="Fricke W.F."/>
            <person name="Mammel M.K."/>
            <person name="McDermott P.F."/>
            <person name="Tartera C."/>
            <person name="White D.G."/>
            <person name="Leclerc J.E."/>
            <person name="Ravel J."/>
            <person name="Cebula T.A."/>
        </authorList>
    </citation>
    <scope>NUCLEOTIDE SEQUENCE [LARGE SCALE GENOMIC DNA]</scope>
    <source>
        <strain>CT_02021853</strain>
    </source>
</reference>
<dbReference type="EC" id="4.2.1.113" evidence="1"/>
<dbReference type="EMBL" id="CP001144">
    <property type="protein sequence ID" value="ACH76027.1"/>
    <property type="molecule type" value="Genomic_DNA"/>
</dbReference>
<dbReference type="RefSeq" id="WP_001255557.1">
    <property type="nucleotide sequence ID" value="NC_011205.1"/>
</dbReference>
<dbReference type="SMR" id="B5FPE5"/>
<dbReference type="KEGG" id="sed:SeD_A2650"/>
<dbReference type="HOGENOM" id="CLU_030273_0_1_6"/>
<dbReference type="UniPathway" id="UPA00079"/>
<dbReference type="UniPathway" id="UPA01057">
    <property type="reaction ID" value="UER00165"/>
</dbReference>
<dbReference type="Proteomes" id="UP000008322">
    <property type="component" value="Chromosome"/>
</dbReference>
<dbReference type="GO" id="GO:0000287">
    <property type="term" value="F:magnesium ion binding"/>
    <property type="evidence" value="ECO:0007669"/>
    <property type="project" value="UniProtKB-UniRule"/>
</dbReference>
<dbReference type="GO" id="GO:0043748">
    <property type="term" value="F:O-succinylbenzoate synthase activity"/>
    <property type="evidence" value="ECO:0007669"/>
    <property type="project" value="UniProtKB-EC"/>
</dbReference>
<dbReference type="GO" id="GO:0009234">
    <property type="term" value="P:menaquinone biosynthetic process"/>
    <property type="evidence" value="ECO:0007669"/>
    <property type="project" value="UniProtKB-UniRule"/>
</dbReference>
<dbReference type="CDD" id="cd03320">
    <property type="entry name" value="OSBS"/>
    <property type="match status" value="1"/>
</dbReference>
<dbReference type="FunFam" id="3.20.20.120:FF:000006">
    <property type="entry name" value="o-succinylbenzoate synthase"/>
    <property type="match status" value="1"/>
</dbReference>
<dbReference type="Gene3D" id="3.20.20.120">
    <property type="entry name" value="Enolase-like C-terminal domain"/>
    <property type="match status" value="1"/>
</dbReference>
<dbReference type="Gene3D" id="3.30.390.10">
    <property type="entry name" value="Enolase-like, N-terminal domain"/>
    <property type="match status" value="1"/>
</dbReference>
<dbReference type="HAMAP" id="MF_00470">
    <property type="entry name" value="MenC_1"/>
    <property type="match status" value="1"/>
</dbReference>
<dbReference type="InterPro" id="IPR036849">
    <property type="entry name" value="Enolase-like_C_sf"/>
</dbReference>
<dbReference type="InterPro" id="IPR029017">
    <property type="entry name" value="Enolase-like_N"/>
</dbReference>
<dbReference type="InterPro" id="IPR029065">
    <property type="entry name" value="Enolase_C-like"/>
</dbReference>
<dbReference type="InterPro" id="IPR013342">
    <property type="entry name" value="Mandelate_racemase_C"/>
</dbReference>
<dbReference type="InterPro" id="IPR010196">
    <property type="entry name" value="OSB_synthase_MenC1"/>
</dbReference>
<dbReference type="InterPro" id="IPR041338">
    <property type="entry name" value="OSBS_N"/>
</dbReference>
<dbReference type="NCBIfam" id="TIGR01927">
    <property type="entry name" value="menC_gam_Gplu"/>
    <property type="match status" value="1"/>
</dbReference>
<dbReference type="NCBIfam" id="NF003473">
    <property type="entry name" value="PRK05105.1"/>
    <property type="match status" value="1"/>
</dbReference>
<dbReference type="PANTHER" id="PTHR48073:SF2">
    <property type="entry name" value="O-SUCCINYLBENZOATE SYNTHASE"/>
    <property type="match status" value="1"/>
</dbReference>
<dbReference type="PANTHER" id="PTHR48073">
    <property type="entry name" value="O-SUCCINYLBENZOATE SYNTHASE-RELATED"/>
    <property type="match status" value="1"/>
</dbReference>
<dbReference type="Pfam" id="PF21508">
    <property type="entry name" value="MenC_N"/>
    <property type="match status" value="1"/>
</dbReference>
<dbReference type="Pfam" id="PF13378">
    <property type="entry name" value="MR_MLE_C"/>
    <property type="match status" value="1"/>
</dbReference>
<dbReference type="SFLD" id="SFLDG00180">
    <property type="entry name" value="muconate_cycloisomerase"/>
    <property type="match status" value="1"/>
</dbReference>
<dbReference type="SFLD" id="SFLDF00009">
    <property type="entry name" value="o-succinylbenzoate_synthase"/>
    <property type="match status" value="1"/>
</dbReference>
<dbReference type="SMART" id="SM00922">
    <property type="entry name" value="MR_MLE"/>
    <property type="match status" value="1"/>
</dbReference>
<dbReference type="SUPFAM" id="SSF51604">
    <property type="entry name" value="Enolase C-terminal domain-like"/>
    <property type="match status" value="1"/>
</dbReference>
<dbReference type="SUPFAM" id="SSF54826">
    <property type="entry name" value="Enolase N-terminal domain-like"/>
    <property type="match status" value="1"/>
</dbReference>
<protein>
    <recommendedName>
        <fullName evidence="1">o-succinylbenzoate synthase</fullName>
        <shortName evidence="1">OSB synthase</shortName>
        <shortName evidence="1">OSBS</shortName>
        <ecNumber evidence="1">4.2.1.113</ecNumber>
    </recommendedName>
    <alternativeName>
        <fullName evidence="1">4-(2'-carboxyphenyl)-4-oxybutyric acid synthase</fullName>
    </alternativeName>
    <alternativeName>
        <fullName evidence="1">o-succinylbenzoic acid synthase</fullName>
    </alternativeName>
</protein>
<evidence type="ECO:0000255" key="1">
    <source>
        <dbReference type="HAMAP-Rule" id="MF_00470"/>
    </source>
</evidence>
<feature type="chain" id="PRO_1000125579" description="o-succinylbenzoate synthase">
    <location>
        <begin position="1"/>
        <end position="320"/>
    </location>
</feature>
<feature type="active site" description="Proton donor" evidence="1">
    <location>
        <position position="133"/>
    </location>
</feature>
<feature type="active site" description="Proton acceptor" evidence="1">
    <location>
        <position position="235"/>
    </location>
</feature>
<feature type="binding site" evidence="1">
    <location>
        <position position="161"/>
    </location>
    <ligand>
        <name>Mg(2+)</name>
        <dbReference type="ChEBI" id="CHEBI:18420"/>
    </ligand>
</feature>
<feature type="binding site" evidence="1">
    <location>
        <position position="190"/>
    </location>
    <ligand>
        <name>Mg(2+)</name>
        <dbReference type="ChEBI" id="CHEBI:18420"/>
    </ligand>
</feature>
<feature type="binding site" evidence="1">
    <location>
        <position position="213"/>
    </location>
    <ligand>
        <name>Mg(2+)</name>
        <dbReference type="ChEBI" id="CHEBI:18420"/>
    </ligand>
</feature>
<accession>B5FPE5</accession>
<gene>
    <name evidence="1" type="primary">menC</name>
    <name type="ordered locus">SeD_A2650</name>
</gene>
<name>MENC_SALDC</name>
<keyword id="KW-0456">Lyase</keyword>
<keyword id="KW-0460">Magnesium</keyword>
<keyword id="KW-0474">Menaquinone biosynthesis</keyword>
<keyword id="KW-0479">Metal-binding</keyword>
<organism>
    <name type="scientific">Salmonella dublin (strain CT_02021853)</name>
    <dbReference type="NCBI Taxonomy" id="439851"/>
    <lineage>
        <taxon>Bacteria</taxon>
        <taxon>Pseudomonadati</taxon>
        <taxon>Pseudomonadota</taxon>
        <taxon>Gammaproteobacteria</taxon>
        <taxon>Enterobacterales</taxon>
        <taxon>Enterobacteriaceae</taxon>
        <taxon>Salmonella</taxon>
    </lineage>
</organism>